<keyword id="KW-0479">Metal-binding</keyword>
<keyword id="KW-1185">Reference proteome</keyword>
<keyword id="KW-0687">Ribonucleoprotein</keyword>
<keyword id="KW-0689">Ribosomal protein</keyword>
<keyword id="KW-0862">Zinc</keyword>
<keyword id="KW-0863">Zinc-finger</keyword>
<reference key="1">
    <citation type="journal article" date="2000" name="Nature">
        <title>Sequence and analysis of chromosome 3 of the plant Arabidopsis thaliana.</title>
        <authorList>
            <person name="Salanoubat M."/>
            <person name="Lemcke K."/>
            <person name="Rieger M."/>
            <person name="Ansorge W."/>
            <person name="Unseld M."/>
            <person name="Fartmann B."/>
            <person name="Valle G."/>
            <person name="Bloecker H."/>
            <person name="Perez-Alonso M."/>
            <person name="Obermaier B."/>
            <person name="Delseny M."/>
            <person name="Boutry M."/>
            <person name="Grivell L.A."/>
            <person name="Mache R."/>
            <person name="Puigdomenech P."/>
            <person name="De Simone V."/>
            <person name="Choisne N."/>
            <person name="Artiguenave F."/>
            <person name="Robert C."/>
            <person name="Brottier P."/>
            <person name="Wincker P."/>
            <person name="Cattolico L."/>
            <person name="Weissenbach J."/>
            <person name="Saurin W."/>
            <person name="Quetier F."/>
            <person name="Schaefer M."/>
            <person name="Mueller-Auer S."/>
            <person name="Gabel C."/>
            <person name="Fuchs M."/>
            <person name="Benes V."/>
            <person name="Wurmbach E."/>
            <person name="Drzonek H."/>
            <person name="Erfle H."/>
            <person name="Jordan N."/>
            <person name="Bangert S."/>
            <person name="Wiedelmann R."/>
            <person name="Kranz H."/>
            <person name="Voss H."/>
            <person name="Holland R."/>
            <person name="Brandt P."/>
            <person name="Nyakatura G."/>
            <person name="Vezzi A."/>
            <person name="D'Angelo M."/>
            <person name="Pallavicini A."/>
            <person name="Toppo S."/>
            <person name="Simionati B."/>
            <person name="Conrad A."/>
            <person name="Hornischer K."/>
            <person name="Kauer G."/>
            <person name="Loehnert T.-H."/>
            <person name="Nordsiek G."/>
            <person name="Reichelt J."/>
            <person name="Scharfe M."/>
            <person name="Schoen O."/>
            <person name="Bargues M."/>
            <person name="Terol J."/>
            <person name="Climent J."/>
            <person name="Navarro P."/>
            <person name="Collado C."/>
            <person name="Perez-Perez A."/>
            <person name="Ottenwaelder B."/>
            <person name="Duchemin D."/>
            <person name="Cooke R."/>
            <person name="Laudie M."/>
            <person name="Berger-Llauro C."/>
            <person name="Purnelle B."/>
            <person name="Masuy D."/>
            <person name="de Haan M."/>
            <person name="Maarse A.C."/>
            <person name="Alcaraz J.-P."/>
            <person name="Cottet A."/>
            <person name="Casacuberta E."/>
            <person name="Monfort A."/>
            <person name="Argiriou A."/>
            <person name="Flores M."/>
            <person name="Liguori R."/>
            <person name="Vitale D."/>
            <person name="Mannhaupt G."/>
            <person name="Haase D."/>
            <person name="Schoof H."/>
            <person name="Rudd S."/>
            <person name="Zaccaria P."/>
            <person name="Mewes H.-W."/>
            <person name="Mayer K.F.X."/>
            <person name="Kaul S."/>
            <person name="Town C.D."/>
            <person name="Koo H.L."/>
            <person name="Tallon L.J."/>
            <person name="Jenkins J."/>
            <person name="Rooney T."/>
            <person name="Rizzo M."/>
            <person name="Walts A."/>
            <person name="Utterback T."/>
            <person name="Fujii C.Y."/>
            <person name="Shea T.P."/>
            <person name="Creasy T.H."/>
            <person name="Haas B."/>
            <person name="Maiti R."/>
            <person name="Wu D."/>
            <person name="Peterson J."/>
            <person name="Van Aken S."/>
            <person name="Pai G."/>
            <person name="Militscher J."/>
            <person name="Sellers P."/>
            <person name="Gill J.E."/>
            <person name="Feldblyum T.V."/>
            <person name="Preuss D."/>
            <person name="Lin X."/>
            <person name="Nierman W.C."/>
            <person name="Salzberg S.L."/>
            <person name="White O."/>
            <person name="Venter J.C."/>
            <person name="Fraser C.M."/>
            <person name="Kaneko T."/>
            <person name="Nakamura Y."/>
            <person name="Sato S."/>
            <person name="Kato T."/>
            <person name="Asamizu E."/>
            <person name="Sasamoto S."/>
            <person name="Kimura T."/>
            <person name="Idesawa K."/>
            <person name="Kawashima K."/>
            <person name="Kishida Y."/>
            <person name="Kiyokawa C."/>
            <person name="Kohara M."/>
            <person name="Matsumoto M."/>
            <person name="Matsuno A."/>
            <person name="Muraki A."/>
            <person name="Nakayama S."/>
            <person name="Nakazaki N."/>
            <person name="Shinpo S."/>
            <person name="Takeuchi C."/>
            <person name="Wada T."/>
            <person name="Watanabe A."/>
            <person name="Yamada M."/>
            <person name="Yasuda M."/>
            <person name="Tabata S."/>
        </authorList>
    </citation>
    <scope>NUCLEOTIDE SEQUENCE [LARGE SCALE GENOMIC DNA]</scope>
    <source>
        <strain>cv. Columbia</strain>
    </source>
</reference>
<reference key="2">
    <citation type="journal article" date="2017" name="Plant J.">
        <title>Araport11: a complete reannotation of the Arabidopsis thaliana reference genome.</title>
        <authorList>
            <person name="Cheng C.Y."/>
            <person name="Krishnakumar V."/>
            <person name="Chan A.P."/>
            <person name="Thibaud-Nissen F."/>
            <person name="Schobel S."/>
            <person name="Town C.D."/>
        </authorList>
    </citation>
    <scope>GENOME REANNOTATION</scope>
    <source>
        <strain>cv. Columbia</strain>
    </source>
</reference>
<reference key="3">
    <citation type="journal article" date="2001" name="Plant Physiol.">
        <title>The organization of cytoplasmic ribosomal protein genes in the Arabidopsis genome.</title>
        <authorList>
            <person name="Barakat A."/>
            <person name="Szick-Miranda K."/>
            <person name="Chang I.-F."/>
            <person name="Guyot R."/>
            <person name="Blanc G."/>
            <person name="Cooke R."/>
            <person name="Delseny M."/>
            <person name="Bailey-Serres J."/>
        </authorList>
    </citation>
    <scope>GENE FAMILY ORGANIZATION</scope>
    <scope>NOMENCLATURE</scope>
</reference>
<reference key="4">
    <citation type="journal article" date="2023" name="Plant Cell">
        <title>An updated nomenclature for plant ribosomal protein genes.</title>
        <authorList>
            <person name="Scarpin M.R."/>
            <person name="Busche M."/>
            <person name="Martinez R.E."/>
            <person name="Harper L.C."/>
            <person name="Reiser L."/>
            <person name="Szakonyi D."/>
            <person name="Merchante C."/>
            <person name="Lan T."/>
            <person name="Xiong W."/>
            <person name="Mo B."/>
            <person name="Tang G."/>
            <person name="Chen X."/>
            <person name="Bailey-Serres J."/>
            <person name="Browning K.S."/>
            <person name="Brunkard J.O."/>
        </authorList>
    </citation>
    <scope>NOMENCLATURE</scope>
</reference>
<comment type="similarity">
    <text evidence="2">Belongs to the eukaryotic ribosomal protein eL43 family.</text>
</comment>
<proteinExistence type="inferred from homology"/>
<organism>
    <name type="scientific">Arabidopsis thaliana</name>
    <name type="common">Mouse-ear cress</name>
    <dbReference type="NCBI Taxonomy" id="3702"/>
    <lineage>
        <taxon>Eukaryota</taxon>
        <taxon>Viridiplantae</taxon>
        <taxon>Streptophyta</taxon>
        <taxon>Embryophyta</taxon>
        <taxon>Tracheophyta</taxon>
        <taxon>Spermatophyta</taxon>
        <taxon>Magnoliopsida</taxon>
        <taxon>eudicotyledons</taxon>
        <taxon>Gunneridae</taxon>
        <taxon>Pentapetalae</taxon>
        <taxon>rosids</taxon>
        <taxon>malvids</taxon>
        <taxon>Brassicales</taxon>
        <taxon>Brassicaceae</taxon>
        <taxon>Camelineae</taxon>
        <taxon>Arabidopsis</taxon>
    </lineage>
</organism>
<evidence type="ECO:0000303" key="1">
    <source>
    </source>
</evidence>
<evidence type="ECO:0000305" key="2"/>
<gene>
    <name type="primary">RPL37AB</name>
    <name type="ordered locus">At3g10950</name>
    <name type="ORF">F9F8.23</name>
</gene>
<accession>Q9SRK6</accession>
<dbReference type="EMBL" id="AC009991">
    <property type="protein sequence ID" value="AAF01526.1"/>
    <property type="molecule type" value="Genomic_DNA"/>
</dbReference>
<dbReference type="EMBL" id="CP002686">
    <property type="protein sequence ID" value="AEE74981.1"/>
    <property type="molecule type" value="Genomic_DNA"/>
</dbReference>
<dbReference type="RefSeq" id="NP_187706.1">
    <property type="nucleotide sequence ID" value="NM_111932.1"/>
</dbReference>
<dbReference type="SMR" id="Q9SRK6"/>
<dbReference type="BioGRID" id="5600">
    <property type="interactions" value="110"/>
</dbReference>
<dbReference type="FunCoup" id="Q9SRK6">
    <property type="interactions" value="2277"/>
</dbReference>
<dbReference type="STRING" id="3702.Q9SRK6"/>
<dbReference type="GlyGen" id="Q9SRK6">
    <property type="glycosylation" value="1 site"/>
</dbReference>
<dbReference type="PaxDb" id="3702-AT3G10950.1"/>
<dbReference type="EnsemblPlants" id="AT3G10950.1">
    <property type="protein sequence ID" value="AT3G10950.1"/>
    <property type="gene ID" value="AT3G10950"/>
</dbReference>
<dbReference type="GeneID" id="820266"/>
<dbReference type="Gramene" id="AT3G10950.1">
    <property type="protein sequence ID" value="AT3G10950.1"/>
    <property type="gene ID" value="AT3G10950"/>
</dbReference>
<dbReference type="KEGG" id="ath:AT3G10950"/>
<dbReference type="Araport" id="AT3G10950"/>
<dbReference type="TAIR" id="AT3G10950"/>
<dbReference type="eggNOG" id="KOG0402">
    <property type="taxonomic scope" value="Eukaryota"/>
</dbReference>
<dbReference type="HOGENOM" id="CLU_141199_1_0_1"/>
<dbReference type="InParanoid" id="Q9SRK6"/>
<dbReference type="OMA" id="GPRYGRK"/>
<dbReference type="PhylomeDB" id="Q9SRK6"/>
<dbReference type="PRO" id="PR:Q9SRK6"/>
<dbReference type="Proteomes" id="UP000006548">
    <property type="component" value="Chromosome 3"/>
</dbReference>
<dbReference type="ExpressionAtlas" id="Q9SRK6">
    <property type="expression patterns" value="baseline and differential"/>
</dbReference>
<dbReference type="GO" id="GO:0005829">
    <property type="term" value="C:cytosol"/>
    <property type="evidence" value="ECO:0007005"/>
    <property type="project" value="TAIR"/>
</dbReference>
<dbReference type="GO" id="GO:0022625">
    <property type="term" value="C:cytosolic large ribosomal subunit"/>
    <property type="evidence" value="ECO:0007005"/>
    <property type="project" value="TAIR"/>
</dbReference>
<dbReference type="GO" id="GO:0003735">
    <property type="term" value="F:structural constituent of ribosome"/>
    <property type="evidence" value="ECO:0000314"/>
    <property type="project" value="CAFA"/>
</dbReference>
<dbReference type="GO" id="GO:0008270">
    <property type="term" value="F:zinc ion binding"/>
    <property type="evidence" value="ECO:0007669"/>
    <property type="project" value="UniProtKB-KW"/>
</dbReference>
<dbReference type="GO" id="GO:0006412">
    <property type="term" value="P:translation"/>
    <property type="evidence" value="ECO:0007669"/>
    <property type="project" value="InterPro"/>
</dbReference>
<dbReference type="FunFam" id="2.20.25.30:FF:000002">
    <property type="entry name" value="60S ribosomal protein L37a"/>
    <property type="match status" value="1"/>
</dbReference>
<dbReference type="Gene3D" id="2.20.25.30">
    <property type="match status" value="1"/>
</dbReference>
<dbReference type="HAMAP" id="MF_00327">
    <property type="entry name" value="Ribosomal_eL43"/>
    <property type="match status" value="1"/>
</dbReference>
<dbReference type="InterPro" id="IPR011331">
    <property type="entry name" value="Ribosomal_eL37/eL43"/>
</dbReference>
<dbReference type="InterPro" id="IPR002674">
    <property type="entry name" value="Ribosomal_eL43"/>
</dbReference>
<dbReference type="InterPro" id="IPR011332">
    <property type="entry name" value="Ribosomal_zn-bd"/>
</dbReference>
<dbReference type="NCBIfam" id="TIGR00280">
    <property type="entry name" value="eL43_euk_arch"/>
    <property type="match status" value="1"/>
</dbReference>
<dbReference type="PANTHER" id="PTHR48149">
    <property type="entry name" value="60S RIBOSOMAL PROTEIN L37A-2"/>
    <property type="match status" value="1"/>
</dbReference>
<dbReference type="PANTHER" id="PTHR48149:SF1">
    <property type="entry name" value="LARGE RIBOSOMAL SUBUNIT PROTEIN EL43Y"/>
    <property type="match status" value="1"/>
</dbReference>
<dbReference type="Pfam" id="PF01780">
    <property type="entry name" value="Ribosomal_L37ae"/>
    <property type="match status" value="1"/>
</dbReference>
<dbReference type="SUPFAM" id="SSF57829">
    <property type="entry name" value="Zn-binding ribosomal proteins"/>
    <property type="match status" value="1"/>
</dbReference>
<feature type="chain" id="PRO_0000139830" description="Large ribosomal subunit protein eL43z">
    <location>
        <begin position="1"/>
        <end position="92"/>
    </location>
</feature>
<feature type="zinc finger region" description="C4-type">
    <location>
        <begin position="39"/>
        <end position="60"/>
    </location>
</feature>
<name>R37A1_ARATH</name>
<sequence length="92" mass="10445">MTKRTKKARIVGKYGTRYGASLRKQIKKMEVSQHNKYFCEFCGKYSVKRKVVGIWGCKDCGKVKAGGAYTMNTASAVTVRSTIRRLREQTES</sequence>
<protein>
    <recommendedName>
        <fullName evidence="1">Large ribosomal subunit protein eL43z</fullName>
    </recommendedName>
    <alternativeName>
        <fullName>Putative 60S ribosomal protein L37a-1</fullName>
    </alternativeName>
</protein>